<dbReference type="EC" id="6.3.1.1" evidence="1"/>
<dbReference type="EMBL" id="CP001033">
    <property type="protein sequence ID" value="ACB91188.1"/>
    <property type="molecule type" value="Genomic_DNA"/>
</dbReference>
<dbReference type="RefSeq" id="WP_000747993.1">
    <property type="nucleotide sequence ID" value="NC_010582.1"/>
</dbReference>
<dbReference type="SMR" id="B2IM49"/>
<dbReference type="GeneID" id="45652817"/>
<dbReference type="KEGG" id="spw:SPCG_1934"/>
<dbReference type="HOGENOM" id="CLU_071543_0_0_9"/>
<dbReference type="UniPathway" id="UPA00134">
    <property type="reaction ID" value="UER00194"/>
</dbReference>
<dbReference type="GO" id="GO:0005829">
    <property type="term" value="C:cytosol"/>
    <property type="evidence" value="ECO:0007669"/>
    <property type="project" value="TreeGrafter"/>
</dbReference>
<dbReference type="GO" id="GO:0004071">
    <property type="term" value="F:aspartate-ammonia ligase activity"/>
    <property type="evidence" value="ECO:0007669"/>
    <property type="project" value="UniProtKB-UniRule"/>
</dbReference>
<dbReference type="GO" id="GO:0005524">
    <property type="term" value="F:ATP binding"/>
    <property type="evidence" value="ECO:0007669"/>
    <property type="project" value="UniProtKB-UniRule"/>
</dbReference>
<dbReference type="GO" id="GO:0140096">
    <property type="term" value="F:catalytic activity, acting on a protein"/>
    <property type="evidence" value="ECO:0007669"/>
    <property type="project" value="UniProtKB-ARBA"/>
</dbReference>
<dbReference type="GO" id="GO:0016740">
    <property type="term" value="F:transferase activity"/>
    <property type="evidence" value="ECO:0007669"/>
    <property type="project" value="UniProtKB-ARBA"/>
</dbReference>
<dbReference type="GO" id="GO:0070981">
    <property type="term" value="P:L-asparagine biosynthetic process"/>
    <property type="evidence" value="ECO:0007669"/>
    <property type="project" value="UniProtKB-UniRule"/>
</dbReference>
<dbReference type="CDD" id="cd00645">
    <property type="entry name" value="AsnA"/>
    <property type="match status" value="1"/>
</dbReference>
<dbReference type="Gene3D" id="3.30.930.10">
    <property type="entry name" value="Bira Bifunctional Protein, Domain 2"/>
    <property type="match status" value="1"/>
</dbReference>
<dbReference type="HAMAP" id="MF_00555">
    <property type="entry name" value="AsnA"/>
    <property type="match status" value="1"/>
</dbReference>
<dbReference type="InterPro" id="IPR006195">
    <property type="entry name" value="aa-tRNA-synth_II"/>
</dbReference>
<dbReference type="InterPro" id="IPR045864">
    <property type="entry name" value="aa-tRNA-synth_II/BPL/LPL"/>
</dbReference>
<dbReference type="InterPro" id="IPR004618">
    <property type="entry name" value="AsnA"/>
</dbReference>
<dbReference type="NCBIfam" id="TIGR00669">
    <property type="entry name" value="asnA"/>
    <property type="match status" value="1"/>
</dbReference>
<dbReference type="PANTHER" id="PTHR30073">
    <property type="entry name" value="ASPARTATE--AMMONIA LIGASE"/>
    <property type="match status" value="1"/>
</dbReference>
<dbReference type="PANTHER" id="PTHR30073:SF5">
    <property type="entry name" value="ASPARTATE--AMMONIA LIGASE"/>
    <property type="match status" value="1"/>
</dbReference>
<dbReference type="Pfam" id="PF03590">
    <property type="entry name" value="AsnA"/>
    <property type="match status" value="1"/>
</dbReference>
<dbReference type="PIRSF" id="PIRSF001555">
    <property type="entry name" value="Asp_ammon_ligase"/>
    <property type="match status" value="1"/>
</dbReference>
<dbReference type="SUPFAM" id="SSF55681">
    <property type="entry name" value="Class II aaRS and biotin synthetases"/>
    <property type="match status" value="1"/>
</dbReference>
<dbReference type="PROSITE" id="PS50862">
    <property type="entry name" value="AA_TRNA_LIGASE_II"/>
    <property type="match status" value="1"/>
</dbReference>
<organism>
    <name type="scientific">Streptococcus pneumoniae (strain CGSP14)</name>
    <dbReference type="NCBI Taxonomy" id="516950"/>
    <lineage>
        <taxon>Bacteria</taxon>
        <taxon>Bacillati</taxon>
        <taxon>Bacillota</taxon>
        <taxon>Bacilli</taxon>
        <taxon>Lactobacillales</taxon>
        <taxon>Streptococcaceae</taxon>
        <taxon>Streptococcus</taxon>
    </lineage>
</organism>
<comment type="catalytic activity">
    <reaction evidence="1">
        <text>L-aspartate + NH4(+) + ATP = L-asparagine + AMP + diphosphate + H(+)</text>
        <dbReference type="Rhea" id="RHEA:11372"/>
        <dbReference type="ChEBI" id="CHEBI:15378"/>
        <dbReference type="ChEBI" id="CHEBI:28938"/>
        <dbReference type="ChEBI" id="CHEBI:29991"/>
        <dbReference type="ChEBI" id="CHEBI:30616"/>
        <dbReference type="ChEBI" id="CHEBI:33019"/>
        <dbReference type="ChEBI" id="CHEBI:58048"/>
        <dbReference type="ChEBI" id="CHEBI:456215"/>
        <dbReference type="EC" id="6.3.1.1"/>
    </reaction>
</comment>
<comment type="pathway">
    <text evidence="1">Amino-acid biosynthesis; L-asparagine biosynthesis; L-asparagine from L-aspartate (ammonia route): step 1/1.</text>
</comment>
<comment type="subcellular location">
    <subcellularLocation>
        <location evidence="1">Cytoplasm</location>
    </subcellularLocation>
</comment>
<comment type="similarity">
    <text evidence="1">Belongs to the class-II aminoacyl-tRNA synthetase family. AsnA subfamily.</text>
</comment>
<evidence type="ECO:0000255" key="1">
    <source>
        <dbReference type="HAMAP-Rule" id="MF_00555"/>
    </source>
</evidence>
<reference key="1">
    <citation type="journal article" date="2009" name="BMC Genomics">
        <title>Genome evolution driven by host adaptations results in a more virulent and antimicrobial-resistant Streptococcus pneumoniae serotype 14.</title>
        <authorList>
            <person name="Ding F."/>
            <person name="Tang P."/>
            <person name="Hsu M.-H."/>
            <person name="Cui P."/>
            <person name="Hu S."/>
            <person name="Yu J."/>
            <person name="Chiu C.-H."/>
        </authorList>
    </citation>
    <scope>NUCLEOTIDE SEQUENCE [LARGE SCALE GENOMIC DNA]</scope>
    <source>
        <strain>CGSP14</strain>
    </source>
</reference>
<name>ASNA_STRPS</name>
<sequence length="330" mass="37618">MKKSFIHQQEEISFVKNTFTQYLKDKLEVVEVQGPILSKVGDGMQDNLSGVENPVSVKVLQIPDATYEVVHSLAKWKRHTLARFGFGEGEGLFVHMKALRPDEDSLDATHSVYVDQWDWEKVIPNGKRNIVYLKETVEKIYKAIRLTELAVEARYDIESILPKQITFIHTEELVERYPDLTPKERENAICKEFGAVFLIGIGGELPDGKPHDGRAPDYDDWTSESENGYKGLNGDILVWNESLGGAFELSSMGIRVDEETLRRQVEITGDEDRLELEWHKSLLNGLFPLTIGGGIGQSRMAMFLLRKRHIGEVQTSVWPQEVRDTYENIL</sequence>
<keyword id="KW-0028">Amino-acid biosynthesis</keyword>
<keyword id="KW-0061">Asparagine biosynthesis</keyword>
<keyword id="KW-0067">ATP-binding</keyword>
<keyword id="KW-0963">Cytoplasm</keyword>
<keyword id="KW-0436">Ligase</keyword>
<keyword id="KW-0547">Nucleotide-binding</keyword>
<protein>
    <recommendedName>
        <fullName evidence="1">Aspartate--ammonia ligase</fullName>
        <ecNumber evidence="1">6.3.1.1</ecNumber>
    </recommendedName>
    <alternativeName>
        <fullName evidence="1">Asparagine synthetase A</fullName>
    </alternativeName>
</protein>
<gene>
    <name evidence="1" type="primary">asnA</name>
    <name type="ordered locus">SPCG_1934</name>
</gene>
<proteinExistence type="inferred from homology"/>
<accession>B2IM49</accession>
<feature type="chain" id="PRO_1000129134" description="Aspartate--ammonia ligase">
    <location>
        <begin position="1"/>
        <end position="330"/>
    </location>
</feature>